<sequence>CFPGNCPDS</sequence>
<accession>P0DQM6</accession>
<dbReference type="GO" id="GO:0005576">
    <property type="term" value="C:extracellular region"/>
    <property type="evidence" value="ECO:0007669"/>
    <property type="project" value="UniProtKB-SubCell"/>
</dbReference>
<dbReference type="GO" id="GO:0090729">
    <property type="term" value="F:toxin activity"/>
    <property type="evidence" value="ECO:0007669"/>
    <property type="project" value="UniProtKB-KW"/>
</dbReference>
<reference key="1">
    <citation type="journal article" date="2020" name="Mar. Drugs">
        <title>Synthesis, pharmacological and structural characterization of novel conopressins from Conus miliaris.</title>
        <authorList>
            <person name="Giribaldi J."/>
            <person name="Ragnarsson L."/>
            <person name="Pujante T."/>
            <person name="Enjalbal C."/>
            <person name="Wilson D."/>
            <person name="Daly N.L."/>
            <person name="Lewis R.J."/>
            <person name="Dutertre S."/>
        </authorList>
    </citation>
    <scope>NUCLEOTIDE SEQUENCE [MRNA]</scope>
    <scope>FUNCTION</scope>
    <scope>SYNTHESIS</scope>
    <scope>DISULFIDE BOND</scope>
    <scope>AMIDATION AT SER-9</scope>
    <scope>STRUCTURE BY NMR</scope>
</reference>
<comment type="function">
    <text evidence="1">Shows reduced activity on vasopressin-oxytocin related receptors. Is more active on fish receptors, than on their human counterpart, supporting an evolved role of this conopressin in the envenomation process. Shows weak agonist activity on the zebrafish vasopressin receptor 1Ab (V1a1R) (EC(50)=13.6 uM). Also has weaker agonist activity on the human vasopressin receptor AVPR1B (EC(50)=38.2 uM). Has no effect on all other receptors tested.</text>
</comment>
<comment type="subcellular location">
    <subcellularLocation>
        <location evidence="4">Secreted</location>
    </subcellularLocation>
</comment>
<comment type="tissue specificity">
    <text evidence="4">Expressed by the venom duct.</text>
</comment>
<comment type="domain">
    <text evidence="3">The cysteine framework is C-C.</text>
</comment>
<comment type="domain">
    <text evidence="1">This synthetic peptide shows multiple conformations, possibly due to cis-trans isomerization.</text>
</comment>
<comment type="PTM">
    <text evidence="1">It is unsure whether Ser-9 is amidated or not, it is why the two forms have been synthesized. The non-amidated form shows a very weak agonist activity on the zebrafish vasopressin receptor 1Ab (V1a1R) (EC(50)=117 uM). The state of the C-terminal residue does not impact its 3D-structure.</text>
</comment>
<comment type="similarity">
    <text evidence="3">Belongs to the vasopressin/oxytocin family.</text>
</comment>
<proteinExistence type="evidence at protein level"/>
<evidence type="ECO:0000269" key="1">
    <source>
    </source>
</evidence>
<evidence type="ECO:0000303" key="2">
    <source>
    </source>
</evidence>
<evidence type="ECO:0000305" key="3"/>
<evidence type="ECO:0000305" key="4">
    <source>
    </source>
</evidence>
<protein>
    <recommendedName>
        <fullName evidence="2">Conopressin-M1</fullName>
        <shortName evidence="2">Con-M1</shortName>
    </recommendedName>
</protein>
<organism>
    <name type="scientific">Conus miliaris</name>
    <name type="common">Thousand-spot cone</name>
    <dbReference type="NCBI Taxonomy" id="97181"/>
    <lineage>
        <taxon>Eukaryota</taxon>
        <taxon>Metazoa</taxon>
        <taxon>Spiralia</taxon>
        <taxon>Lophotrochozoa</taxon>
        <taxon>Mollusca</taxon>
        <taxon>Gastropoda</taxon>
        <taxon>Caenogastropoda</taxon>
        <taxon>Neogastropoda</taxon>
        <taxon>Conoidea</taxon>
        <taxon>Conidae</taxon>
        <taxon>Conus</taxon>
        <taxon>Virroconus</taxon>
    </lineage>
</organism>
<feature type="peptide" id="PRO_0000450673" description="Conopressin-M1" evidence="4">
    <location>
        <begin position="1"/>
        <end position="9"/>
    </location>
</feature>
<feature type="site" description="Aromatic residue important for selectivity towards vasopressin receptors" evidence="4">
    <location>
        <position position="3"/>
    </location>
</feature>
<feature type="site" description="Non-basic residue surely responsible of very weak activity" evidence="4">
    <location>
        <position position="8"/>
    </location>
</feature>
<feature type="modified residue" description="Serine amide" evidence="4">
    <location>
        <position position="9"/>
    </location>
</feature>
<feature type="disulfide bond" evidence="4">
    <location>
        <begin position="1"/>
        <end position="6"/>
    </location>
</feature>
<name>CONO1_CONML</name>
<keyword id="KW-0027">Amidation</keyword>
<keyword id="KW-1015">Disulfide bond</keyword>
<keyword id="KW-1213">G-protein coupled receptor impairing toxin</keyword>
<keyword id="KW-0964">Secreted</keyword>
<keyword id="KW-0800">Toxin</keyword>